<protein>
    <recommendedName>
        <fullName evidence="1">tRNA/tmRNA (uracil-C(5))-methyltransferase</fullName>
        <ecNumber evidence="1">2.1.1.-</ecNumber>
        <ecNumber evidence="1">2.1.1.35</ecNumber>
    </recommendedName>
    <alternativeName>
        <fullName evidence="1">tRNA (uracil(54)-C(5))-methyltransferase</fullName>
    </alternativeName>
    <alternativeName>
        <fullName evidence="1">tRNA(m5U54)-methyltransferase</fullName>
        <shortName evidence="1">RUMT</shortName>
    </alternativeName>
    <alternativeName>
        <fullName evidence="1">tmRNA (uracil(341)-C(5))-methyltransferase</fullName>
    </alternativeName>
</protein>
<keyword id="KW-0489">Methyltransferase</keyword>
<keyword id="KW-1185">Reference proteome</keyword>
<keyword id="KW-0949">S-adenosyl-L-methionine</keyword>
<keyword id="KW-0808">Transferase</keyword>
<keyword id="KW-0819">tRNA processing</keyword>
<proteinExistence type="inferred from homology"/>
<reference key="1">
    <citation type="submission" date="2003-06" db="EMBL/GenBank/DDBJ databases">
        <title>The complete genome sequence of Haemophilus ducreyi.</title>
        <authorList>
            <person name="Munson R.S. Jr."/>
            <person name="Ray W.C."/>
            <person name="Mahairas G."/>
            <person name="Sabo P."/>
            <person name="Mungur R."/>
            <person name="Johnson L."/>
            <person name="Nguyen D."/>
            <person name="Wang J."/>
            <person name="Forst C."/>
            <person name="Hood L."/>
        </authorList>
    </citation>
    <scope>NUCLEOTIDE SEQUENCE [LARGE SCALE GENOMIC DNA]</scope>
    <source>
        <strain>35000HP / ATCC 700724</strain>
    </source>
</reference>
<gene>
    <name evidence="1" type="primary">trmA</name>
    <name type="ordered locus">HD_0723</name>
</gene>
<evidence type="ECO:0000255" key="1">
    <source>
        <dbReference type="HAMAP-Rule" id="MF_01011"/>
    </source>
</evidence>
<feature type="chain" id="PRO_0000161863" description="tRNA/tmRNA (uracil-C(5))-methyltransferase">
    <location>
        <begin position="1"/>
        <end position="369"/>
    </location>
</feature>
<feature type="active site" description="Nucleophile" evidence="1">
    <location>
        <position position="327"/>
    </location>
</feature>
<feature type="active site" description="Proton acceptor" evidence="1">
    <location>
        <position position="361"/>
    </location>
</feature>
<feature type="binding site" evidence="1">
    <location>
        <position position="192"/>
    </location>
    <ligand>
        <name>S-adenosyl-L-methionine</name>
        <dbReference type="ChEBI" id="CHEBI:59789"/>
    </ligand>
</feature>
<feature type="binding site" evidence="1">
    <location>
        <position position="221"/>
    </location>
    <ligand>
        <name>S-adenosyl-L-methionine</name>
        <dbReference type="ChEBI" id="CHEBI:59789"/>
    </ligand>
</feature>
<feature type="binding site" evidence="1">
    <location>
        <position position="226"/>
    </location>
    <ligand>
        <name>S-adenosyl-L-methionine</name>
        <dbReference type="ChEBI" id="CHEBI:59789"/>
    </ligand>
</feature>
<feature type="binding site" evidence="1">
    <location>
        <position position="242"/>
    </location>
    <ligand>
        <name>S-adenosyl-L-methionine</name>
        <dbReference type="ChEBI" id="CHEBI:59789"/>
    </ligand>
</feature>
<feature type="binding site" evidence="1">
    <location>
        <position position="302"/>
    </location>
    <ligand>
        <name>S-adenosyl-L-methionine</name>
        <dbReference type="ChEBI" id="CHEBI:59789"/>
    </ligand>
</feature>
<accession>Q7U339</accession>
<sequence>MSLPIEQYPELLAQKVDNLTALLAPFNPPPFDIFASETSHFRMRAEFRVWHQKNEQGENDLYHIMFDPTTKQRYRVDQLPIANQLINTMMQKLLTQIQGIPVLTHKLFQVDYLTTLSGEIAISLLYHKKLTDEWLAQAKLLKQRLSEPGLTVHIIGRASKQKIAIDCDYVKEKLNVAGKTLIYRQVENSFTQPNAKMNINMLEWAQKCTANSQDSDLLELYCGNGNFSIALAGNFRKVLATEICKSSVHSAQYNIAQNGIDNLQIIRMSAEEFTQAINGVRQFNRLQGIDLSAYQCNTIFVDPPRAGLDQATLNMVQNYPRILYISCNPATLADNLRQLTTTHRIERVALFDQFPYTHHIESGVWLIRK</sequence>
<name>TRMA_HAEDU</name>
<dbReference type="EC" id="2.1.1.-" evidence="1"/>
<dbReference type="EC" id="2.1.1.35" evidence="1"/>
<dbReference type="EMBL" id="AE017143">
    <property type="protein sequence ID" value="AAP95637.1"/>
    <property type="molecule type" value="Genomic_DNA"/>
</dbReference>
<dbReference type="RefSeq" id="WP_010944689.1">
    <property type="nucleotide sequence ID" value="NC_002940.2"/>
</dbReference>
<dbReference type="SMR" id="Q7U339"/>
<dbReference type="STRING" id="233412.HD_0723"/>
<dbReference type="KEGG" id="hdu:HD_0723"/>
<dbReference type="eggNOG" id="COG2265">
    <property type="taxonomic scope" value="Bacteria"/>
</dbReference>
<dbReference type="HOGENOM" id="CLU_043022_0_0_6"/>
<dbReference type="OrthoDB" id="9804590at2"/>
<dbReference type="Proteomes" id="UP000001022">
    <property type="component" value="Chromosome"/>
</dbReference>
<dbReference type="GO" id="GO:0005829">
    <property type="term" value="C:cytosol"/>
    <property type="evidence" value="ECO:0007669"/>
    <property type="project" value="TreeGrafter"/>
</dbReference>
<dbReference type="GO" id="GO:0019843">
    <property type="term" value="F:rRNA binding"/>
    <property type="evidence" value="ECO:0007669"/>
    <property type="project" value="TreeGrafter"/>
</dbReference>
<dbReference type="GO" id="GO:0030697">
    <property type="term" value="F:tRNA (uracil(54)-C5)-methyltransferase activity, S-adenosyl methionine-dependent"/>
    <property type="evidence" value="ECO:0007669"/>
    <property type="project" value="UniProtKB-UniRule"/>
</dbReference>
<dbReference type="GO" id="GO:0000049">
    <property type="term" value="F:tRNA binding"/>
    <property type="evidence" value="ECO:0007669"/>
    <property type="project" value="TreeGrafter"/>
</dbReference>
<dbReference type="GO" id="GO:0030488">
    <property type="term" value="P:tRNA methylation"/>
    <property type="evidence" value="ECO:0007669"/>
    <property type="project" value="UniProtKB-UniRule"/>
</dbReference>
<dbReference type="CDD" id="cd02440">
    <property type="entry name" value="AdoMet_MTases"/>
    <property type="match status" value="1"/>
</dbReference>
<dbReference type="FunFam" id="2.40.50.1070:FF:000001">
    <property type="entry name" value="tRNA/tmRNA (uracil-C(5))-methyltransferase"/>
    <property type="match status" value="1"/>
</dbReference>
<dbReference type="FunFam" id="3.40.50.150:FF:000012">
    <property type="entry name" value="tRNA/tmRNA (uracil-C(5))-methyltransferase"/>
    <property type="match status" value="1"/>
</dbReference>
<dbReference type="Gene3D" id="2.40.50.1070">
    <property type="match status" value="1"/>
</dbReference>
<dbReference type="Gene3D" id="3.40.50.150">
    <property type="entry name" value="Vaccinia Virus protein VP39"/>
    <property type="match status" value="1"/>
</dbReference>
<dbReference type="HAMAP" id="MF_01011">
    <property type="entry name" value="RNA_methyltr_TrmA"/>
    <property type="match status" value="1"/>
</dbReference>
<dbReference type="InterPro" id="IPR030390">
    <property type="entry name" value="MeTrfase_TrmA_AS"/>
</dbReference>
<dbReference type="InterPro" id="IPR030391">
    <property type="entry name" value="MeTrfase_TrmA_CS"/>
</dbReference>
<dbReference type="InterPro" id="IPR029063">
    <property type="entry name" value="SAM-dependent_MTases_sf"/>
</dbReference>
<dbReference type="InterPro" id="IPR011869">
    <property type="entry name" value="TrmA_MeTrfase"/>
</dbReference>
<dbReference type="InterPro" id="IPR010280">
    <property type="entry name" value="U5_MeTrfase_fam"/>
</dbReference>
<dbReference type="NCBIfam" id="TIGR02143">
    <property type="entry name" value="trmA_only"/>
    <property type="match status" value="1"/>
</dbReference>
<dbReference type="PANTHER" id="PTHR47790">
    <property type="entry name" value="TRNA/TMRNA (URACIL-C(5))-METHYLTRANSFERASE"/>
    <property type="match status" value="1"/>
</dbReference>
<dbReference type="PANTHER" id="PTHR47790:SF2">
    <property type="entry name" value="TRNA_TMRNA (URACIL-C(5))-METHYLTRANSFERASE"/>
    <property type="match status" value="1"/>
</dbReference>
<dbReference type="Pfam" id="PF05958">
    <property type="entry name" value="tRNA_U5-meth_tr"/>
    <property type="match status" value="1"/>
</dbReference>
<dbReference type="SUPFAM" id="SSF53335">
    <property type="entry name" value="S-adenosyl-L-methionine-dependent methyltransferases"/>
    <property type="match status" value="1"/>
</dbReference>
<dbReference type="PROSITE" id="PS51687">
    <property type="entry name" value="SAM_MT_RNA_M5U"/>
    <property type="match status" value="1"/>
</dbReference>
<dbReference type="PROSITE" id="PS01230">
    <property type="entry name" value="TRMA_1"/>
    <property type="match status" value="1"/>
</dbReference>
<dbReference type="PROSITE" id="PS01231">
    <property type="entry name" value="TRMA_2"/>
    <property type="match status" value="1"/>
</dbReference>
<comment type="function">
    <text evidence="1">Dual-specificity methyltransferase that catalyzes the formation of 5-methyluridine at position 54 (m5U54) in all tRNAs, and that of position 341 (m5U341) in tmRNA (transfer-mRNA).</text>
</comment>
<comment type="catalytic activity">
    <reaction evidence="1">
        <text>uridine(54) in tRNA + S-adenosyl-L-methionine = 5-methyluridine(54) in tRNA + S-adenosyl-L-homocysteine + H(+)</text>
        <dbReference type="Rhea" id="RHEA:42712"/>
        <dbReference type="Rhea" id="RHEA-COMP:10167"/>
        <dbReference type="Rhea" id="RHEA-COMP:10193"/>
        <dbReference type="ChEBI" id="CHEBI:15378"/>
        <dbReference type="ChEBI" id="CHEBI:57856"/>
        <dbReference type="ChEBI" id="CHEBI:59789"/>
        <dbReference type="ChEBI" id="CHEBI:65315"/>
        <dbReference type="ChEBI" id="CHEBI:74447"/>
        <dbReference type="EC" id="2.1.1.35"/>
    </reaction>
</comment>
<comment type="catalytic activity">
    <reaction evidence="1">
        <text>uridine(341) in tmRNA + S-adenosyl-L-methionine = 5-methyluridine(341) in tmRNA + S-adenosyl-L-homocysteine + H(+)</text>
        <dbReference type="Rhea" id="RHEA:43612"/>
        <dbReference type="Rhea" id="RHEA-COMP:10630"/>
        <dbReference type="Rhea" id="RHEA-COMP:10631"/>
        <dbReference type="ChEBI" id="CHEBI:15378"/>
        <dbReference type="ChEBI" id="CHEBI:57856"/>
        <dbReference type="ChEBI" id="CHEBI:59789"/>
        <dbReference type="ChEBI" id="CHEBI:65315"/>
        <dbReference type="ChEBI" id="CHEBI:74447"/>
    </reaction>
</comment>
<comment type="similarity">
    <text evidence="1">Belongs to the class I-like SAM-binding methyltransferase superfamily. RNA M5U methyltransferase family. TrmA subfamily.</text>
</comment>
<organism>
    <name type="scientific">Haemophilus ducreyi (strain 35000HP / ATCC 700724)</name>
    <dbReference type="NCBI Taxonomy" id="233412"/>
    <lineage>
        <taxon>Bacteria</taxon>
        <taxon>Pseudomonadati</taxon>
        <taxon>Pseudomonadota</taxon>
        <taxon>Gammaproteobacteria</taxon>
        <taxon>Pasteurellales</taxon>
        <taxon>Pasteurellaceae</taxon>
        <taxon>Haemophilus</taxon>
    </lineage>
</organism>